<keyword id="KW-0131">Cell cycle</keyword>
<keyword id="KW-0132">Cell division</keyword>
<keyword id="KW-0159">Chromosome partition</keyword>
<keyword id="KW-0963">Cytoplasm</keyword>
<name>SCPB_LISIN</name>
<comment type="function">
    <text evidence="1">Participates in chromosomal partition during cell division. May act via the formation of a condensin-like complex containing Smc and ScpA that pull DNA away from mid-cell into both cell halves.</text>
</comment>
<comment type="subunit">
    <text evidence="1">Homodimer. Homodimerization may be required to stabilize the binding of ScpA to the Smc head domains. Component of a cohesin-like complex composed of ScpA, ScpB and the Smc homodimer, in which ScpA and ScpB bind to the head domain of Smc. The presence of the three proteins is required for the association of the complex with DNA.</text>
</comment>
<comment type="subcellular location">
    <subcellularLocation>
        <location evidence="1">Cytoplasm</location>
    </subcellularLocation>
    <text evidence="1">Associated with two foci at the outer edges of the nucleoid region in young cells, and at four foci within both cell halves in older cells.</text>
</comment>
<comment type="similarity">
    <text evidence="1">Belongs to the ScpB family.</text>
</comment>
<accession>Q92A58</accession>
<evidence type="ECO:0000255" key="1">
    <source>
        <dbReference type="HAMAP-Rule" id="MF_01804"/>
    </source>
</evidence>
<evidence type="ECO:0000256" key="2">
    <source>
        <dbReference type="SAM" id="MobiDB-lite"/>
    </source>
</evidence>
<sequence>MNREEQLGVLESLLFAAGDAGLSTEQLTEVMEITHIEALNLLELLSERYNGNEDRGLILLELAGTFQLATKKAHAEFLRKLVEVPSNTVLSQASLETLAIIAYRQPVTRMEVDEVRGVQTDGPIRTLVAKGLVTDKGRVDGAGRAKLYVTTSEFLDAFGLNSLDDLPKLADPEAEDPDQSEMDLFFDRFNQSKEQEEE</sequence>
<protein>
    <recommendedName>
        <fullName evidence="1">Segregation and condensation protein B</fullName>
    </recommendedName>
</protein>
<reference key="1">
    <citation type="journal article" date="2001" name="Science">
        <title>Comparative genomics of Listeria species.</title>
        <authorList>
            <person name="Glaser P."/>
            <person name="Frangeul L."/>
            <person name="Buchrieser C."/>
            <person name="Rusniok C."/>
            <person name="Amend A."/>
            <person name="Baquero F."/>
            <person name="Berche P."/>
            <person name="Bloecker H."/>
            <person name="Brandt P."/>
            <person name="Chakraborty T."/>
            <person name="Charbit A."/>
            <person name="Chetouani F."/>
            <person name="Couve E."/>
            <person name="de Daruvar A."/>
            <person name="Dehoux P."/>
            <person name="Domann E."/>
            <person name="Dominguez-Bernal G."/>
            <person name="Duchaud E."/>
            <person name="Durant L."/>
            <person name="Dussurget O."/>
            <person name="Entian K.-D."/>
            <person name="Fsihi H."/>
            <person name="Garcia-del Portillo F."/>
            <person name="Garrido P."/>
            <person name="Gautier L."/>
            <person name="Goebel W."/>
            <person name="Gomez-Lopez N."/>
            <person name="Hain T."/>
            <person name="Hauf J."/>
            <person name="Jackson D."/>
            <person name="Jones L.-M."/>
            <person name="Kaerst U."/>
            <person name="Kreft J."/>
            <person name="Kuhn M."/>
            <person name="Kunst F."/>
            <person name="Kurapkat G."/>
            <person name="Madueno E."/>
            <person name="Maitournam A."/>
            <person name="Mata Vicente J."/>
            <person name="Ng E."/>
            <person name="Nedjari H."/>
            <person name="Nordsiek G."/>
            <person name="Novella S."/>
            <person name="de Pablos B."/>
            <person name="Perez-Diaz J.-C."/>
            <person name="Purcell R."/>
            <person name="Remmel B."/>
            <person name="Rose M."/>
            <person name="Schlueter T."/>
            <person name="Simoes N."/>
            <person name="Tierrez A."/>
            <person name="Vazquez-Boland J.-A."/>
            <person name="Voss H."/>
            <person name="Wehland J."/>
            <person name="Cossart P."/>
        </authorList>
    </citation>
    <scope>NUCLEOTIDE SEQUENCE [LARGE SCALE GENOMIC DNA]</scope>
    <source>
        <strain>ATCC BAA-680 / CLIP 11262</strain>
    </source>
</reference>
<organism>
    <name type="scientific">Listeria innocua serovar 6a (strain ATCC BAA-680 / CLIP 11262)</name>
    <dbReference type="NCBI Taxonomy" id="272626"/>
    <lineage>
        <taxon>Bacteria</taxon>
        <taxon>Bacillati</taxon>
        <taxon>Bacillota</taxon>
        <taxon>Bacilli</taxon>
        <taxon>Bacillales</taxon>
        <taxon>Listeriaceae</taxon>
        <taxon>Listeria</taxon>
    </lineage>
</organism>
<dbReference type="EMBL" id="AL596170">
    <property type="protein sequence ID" value="CAC97294.1"/>
    <property type="molecule type" value="Genomic_DNA"/>
</dbReference>
<dbReference type="PIR" id="AF1690">
    <property type="entry name" value="AF1690"/>
</dbReference>
<dbReference type="RefSeq" id="WP_010991732.1">
    <property type="nucleotide sequence ID" value="NC_003212.1"/>
</dbReference>
<dbReference type="SMR" id="Q92A58"/>
<dbReference type="STRING" id="272626.gene:17566422"/>
<dbReference type="GeneID" id="93235403"/>
<dbReference type="KEGG" id="lin:lin2064"/>
<dbReference type="eggNOG" id="COG1386">
    <property type="taxonomic scope" value="Bacteria"/>
</dbReference>
<dbReference type="HOGENOM" id="CLU_045647_5_3_9"/>
<dbReference type="OrthoDB" id="9806226at2"/>
<dbReference type="Proteomes" id="UP000002513">
    <property type="component" value="Chromosome"/>
</dbReference>
<dbReference type="GO" id="GO:0005737">
    <property type="term" value="C:cytoplasm"/>
    <property type="evidence" value="ECO:0007669"/>
    <property type="project" value="UniProtKB-SubCell"/>
</dbReference>
<dbReference type="GO" id="GO:0051301">
    <property type="term" value="P:cell division"/>
    <property type="evidence" value="ECO:0007669"/>
    <property type="project" value="UniProtKB-KW"/>
</dbReference>
<dbReference type="GO" id="GO:0051304">
    <property type="term" value="P:chromosome separation"/>
    <property type="evidence" value="ECO:0007669"/>
    <property type="project" value="InterPro"/>
</dbReference>
<dbReference type="GO" id="GO:0006260">
    <property type="term" value="P:DNA replication"/>
    <property type="evidence" value="ECO:0007669"/>
    <property type="project" value="UniProtKB-UniRule"/>
</dbReference>
<dbReference type="Gene3D" id="1.10.10.10">
    <property type="entry name" value="Winged helix-like DNA-binding domain superfamily/Winged helix DNA-binding domain"/>
    <property type="match status" value="2"/>
</dbReference>
<dbReference type="HAMAP" id="MF_01804">
    <property type="entry name" value="ScpB"/>
    <property type="match status" value="1"/>
</dbReference>
<dbReference type="InterPro" id="IPR005234">
    <property type="entry name" value="ScpB_csome_segregation"/>
</dbReference>
<dbReference type="InterPro" id="IPR036388">
    <property type="entry name" value="WH-like_DNA-bd_sf"/>
</dbReference>
<dbReference type="InterPro" id="IPR036390">
    <property type="entry name" value="WH_DNA-bd_sf"/>
</dbReference>
<dbReference type="NCBIfam" id="TIGR00281">
    <property type="entry name" value="SMC-Scp complex subunit ScpB"/>
    <property type="match status" value="1"/>
</dbReference>
<dbReference type="PANTHER" id="PTHR34298">
    <property type="entry name" value="SEGREGATION AND CONDENSATION PROTEIN B"/>
    <property type="match status" value="1"/>
</dbReference>
<dbReference type="PANTHER" id="PTHR34298:SF2">
    <property type="entry name" value="SEGREGATION AND CONDENSATION PROTEIN B"/>
    <property type="match status" value="1"/>
</dbReference>
<dbReference type="Pfam" id="PF04079">
    <property type="entry name" value="SMC_ScpB"/>
    <property type="match status" value="1"/>
</dbReference>
<dbReference type="PIRSF" id="PIRSF019345">
    <property type="entry name" value="ScpB"/>
    <property type="match status" value="1"/>
</dbReference>
<dbReference type="SUPFAM" id="SSF46785">
    <property type="entry name" value="Winged helix' DNA-binding domain"/>
    <property type="match status" value="2"/>
</dbReference>
<proteinExistence type="inferred from homology"/>
<gene>
    <name evidence="1" type="primary">scpB</name>
    <name type="ordered locus">lin2064</name>
</gene>
<feature type="chain" id="PRO_0000211135" description="Segregation and condensation protein B">
    <location>
        <begin position="1"/>
        <end position="198"/>
    </location>
</feature>
<feature type="region of interest" description="Disordered" evidence="2">
    <location>
        <begin position="167"/>
        <end position="198"/>
    </location>
</feature>
<feature type="compositionally biased region" description="Acidic residues" evidence="2">
    <location>
        <begin position="172"/>
        <end position="181"/>
    </location>
</feature>